<feature type="chain" id="PRO_0000391379" description="Protein LSM14 homolog A-B">
    <location>
        <begin position="1"/>
        <end position="471"/>
    </location>
</feature>
<feature type="domain" description="Sm" evidence="5">
    <location>
        <begin position="1"/>
        <end position="81"/>
    </location>
</feature>
<feature type="domain" description="DFDF" evidence="4">
    <location>
        <begin position="287"/>
        <end position="323"/>
    </location>
</feature>
<feature type="region of interest" description="Disordered" evidence="6">
    <location>
        <begin position="172"/>
        <end position="292"/>
    </location>
</feature>
<feature type="region of interest" description="Disordered" evidence="6">
    <location>
        <begin position="320"/>
        <end position="353"/>
    </location>
</feature>
<feature type="region of interest" description="Disordered" evidence="6">
    <location>
        <begin position="399"/>
        <end position="460"/>
    </location>
</feature>
<feature type="short sequence motif" description="FFD box">
    <location>
        <begin position="362"/>
        <end position="378"/>
    </location>
</feature>
<feature type="short sequence motif" description="TFG box">
    <location>
        <begin position="381"/>
        <end position="401"/>
    </location>
</feature>
<feature type="compositionally biased region" description="Polar residues" evidence="6">
    <location>
        <begin position="172"/>
        <end position="185"/>
    </location>
</feature>
<feature type="compositionally biased region" description="Low complexity" evidence="6">
    <location>
        <begin position="208"/>
        <end position="227"/>
    </location>
</feature>
<feature type="compositionally biased region" description="Basic and acidic residues" evidence="6">
    <location>
        <begin position="232"/>
        <end position="261"/>
    </location>
</feature>
<feature type="compositionally biased region" description="Basic residues" evidence="6">
    <location>
        <begin position="272"/>
        <end position="286"/>
    </location>
</feature>
<feature type="compositionally biased region" description="Basic and acidic residues" evidence="6">
    <location>
        <begin position="320"/>
        <end position="340"/>
    </location>
</feature>
<feature type="compositionally biased region" description="Gly residues" evidence="6">
    <location>
        <begin position="411"/>
        <end position="421"/>
    </location>
</feature>
<feature type="compositionally biased region" description="Gly residues" evidence="6">
    <location>
        <begin position="432"/>
        <end position="452"/>
    </location>
</feature>
<accession>Q8AVJ2</accession>
<protein>
    <recommendedName>
        <fullName>Protein LSM14 homolog A-B</fullName>
    </recommendedName>
    <alternativeName>
        <fullName>RNA-associated protein 55A-B</fullName>
        <shortName>RAP55A-B</shortName>
    </alternativeName>
</protein>
<gene>
    <name type="primary">lsm14a-b</name>
    <name type="synonym">rap55a-b</name>
</gene>
<proteinExistence type="evidence at transcript level"/>
<evidence type="ECO:0000250" key="1">
    <source>
        <dbReference type="UniProtKB" id="A0A8M2"/>
    </source>
</evidence>
<evidence type="ECO:0000250" key="2">
    <source>
        <dbReference type="UniProtKB" id="Q8ND56"/>
    </source>
</evidence>
<evidence type="ECO:0000255" key="3"/>
<evidence type="ECO:0000255" key="4">
    <source>
        <dbReference type="PROSITE-ProRule" id="PRU00845"/>
    </source>
</evidence>
<evidence type="ECO:0000255" key="5">
    <source>
        <dbReference type="PROSITE-ProRule" id="PRU01346"/>
    </source>
</evidence>
<evidence type="ECO:0000256" key="6">
    <source>
        <dbReference type="SAM" id="MobiDB-lite"/>
    </source>
</evidence>
<evidence type="ECO:0000312" key="7">
    <source>
        <dbReference type="EMBL" id="AAH42251.1"/>
    </source>
</evidence>
<keyword id="KW-0963">Cytoplasm</keyword>
<keyword id="KW-0217">Developmental protein</keyword>
<keyword id="KW-0597">Phosphoprotein</keyword>
<keyword id="KW-1185">Reference proteome</keyword>
<keyword id="KW-0678">Repressor</keyword>
<keyword id="KW-0687">Ribonucleoprotein</keyword>
<keyword id="KW-0810">Translation regulation</keyword>
<sequence length="471" mass="51269">MSGGTPYIGSKISLISKAEIRYEGILYTIDTENSTVALAKVRSFGTEDRPTDRPIPPRDEVFEYIIFRGSDIKDLTVCEPPKPQCSLPQDPAIVQSSLGSSSASSFQSVSSYGPFGRMPTYSQFSTSPLVGQQFGAVAGSSLTSFGAETTSSTSLPPSSVVGSTFTQEARTLKTQLSQGRSSSPLDSLRKSPTIEQAVQTASAPHPPSSAAVGRRSPVLSRPLPSSSQKTAESPEQRKGELHKIQRPDTEQKNDYKNDLSRRQPVLSAAQPRRGRGGNRGGRGRFGVRRDGPMKFEKDFDFESANAQFNKEDIDREFHNKLKLKDDKPEKPLNGEDKTDSGVDTQNSEGHAEEEDVLAAGVCYYDKTKSFFDSISCDDNRDRRQTWAEERRMNAETFGLPLRSNRGRGGYRGRGGGMGFRGGRGRGGERRGAPGGVGGFGPSRGYRGGSRGGRGGREFAEYEYRKDNKVAA</sequence>
<comment type="function">
    <text evidence="1">RNA-binding component of messenger ribonucleoprotein complexes (mRNPs), storage particles that mask maternal mRNAs from the translational apparatus during oocyte maturation. Acts as a repressor of mRNA translation. Probably involved in the storage of translationally inactive mRNAs in the cytoplasm in order to prevent their degradation.</text>
</comment>
<comment type="subunit">
    <text evidence="1">Component of a ribonucleoprotein (RNP) complex, at least composed of lsm14a/rap55a, ybx2/frgy2, ddx6/Xp54 and eif4enif1/4E-T. Also forms a complex with prmt1 independently of ybx2/frgy2. Interacts with ddx6/Xp54 but does not appear to directly bind ybx2/frgy2. Different translationally-repressed mRNP complexes probably exist that contain either lsm14a/rap55a or lsm14b/rap55b depending on the developmental stage (By similarity).</text>
</comment>
<comment type="subcellular location">
    <subcellularLocation>
        <location evidence="1">Cytoplasm</location>
    </subcellularLocation>
    <subcellularLocation>
        <location evidence="2">Cytoplasm</location>
        <location evidence="2">P-body</location>
    </subcellularLocation>
    <subcellularLocation>
        <location evidence="2">Cytoplasm</location>
        <location evidence="2">Stress granule</location>
    </subcellularLocation>
    <text evidence="1">Localizes to cytoplasmic particles in stage VI oocytes and eggs.</text>
</comment>
<comment type="domain">
    <text evidence="1">The RGG repeats are required for interaction with ddx6/Xp54 and accumulation in ribonucleoprotein complexes.</text>
</comment>
<comment type="PTM">
    <text evidence="1">Phosphorylated.</text>
</comment>
<comment type="similarity">
    <text evidence="3">Belongs to the LSM14 family.</text>
</comment>
<organism>
    <name type="scientific">Xenopus laevis</name>
    <name type="common">African clawed frog</name>
    <dbReference type="NCBI Taxonomy" id="8355"/>
    <lineage>
        <taxon>Eukaryota</taxon>
        <taxon>Metazoa</taxon>
        <taxon>Chordata</taxon>
        <taxon>Craniata</taxon>
        <taxon>Vertebrata</taxon>
        <taxon>Euteleostomi</taxon>
        <taxon>Amphibia</taxon>
        <taxon>Batrachia</taxon>
        <taxon>Anura</taxon>
        <taxon>Pipoidea</taxon>
        <taxon>Pipidae</taxon>
        <taxon>Xenopodinae</taxon>
        <taxon>Xenopus</taxon>
        <taxon>Xenopus</taxon>
    </lineage>
</organism>
<name>L14AB_XENLA</name>
<dbReference type="EMBL" id="BC042251">
    <property type="protein sequence ID" value="AAH42251.1"/>
    <property type="molecule type" value="mRNA"/>
</dbReference>
<dbReference type="RefSeq" id="NP_001079434.1">
    <property type="nucleotide sequence ID" value="NM_001085965.1"/>
</dbReference>
<dbReference type="BMRB" id="Q8AVJ2"/>
<dbReference type="SMR" id="Q8AVJ2"/>
<dbReference type="IntAct" id="Q8AVJ2">
    <property type="interactions" value="1"/>
</dbReference>
<dbReference type="DNASU" id="379121"/>
<dbReference type="GeneID" id="379121"/>
<dbReference type="KEGG" id="xla:379121"/>
<dbReference type="AGR" id="Xenbase:XB-GENE-6251640"/>
<dbReference type="CTD" id="379121"/>
<dbReference type="Xenbase" id="XB-GENE-6251640">
    <property type="gene designation" value="lsm14a.S"/>
</dbReference>
<dbReference type="OrthoDB" id="21539at2759"/>
<dbReference type="Proteomes" id="UP000186698">
    <property type="component" value="Chromosome 4S"/>
</dbReference>
<dbReference type="Bgee" id="379121">
    <property type="expression patterns" value="Expressed in blastula and 19 other cell types or tissues"/>
</dbReference>
<dbReference type="GO" id="GO:0005737">
    <property type="term" value="C:cytoplasm"/>
    <property type="evidence" value="ECO:0000250"/>
    <property type="project" value="UniProtKB"/>
</dbReference>
<dbReference type="GO" id="GO:0010494">
    <property type="term" value="C:cytoplasmic stress granule"/>
    <property type="evidence" value="ECO:0007669"/>
    <property type="project" value="UniProtKB-SubCell"/>
</dbReference>
<dbReference type="GO" id="GO:0000932">
    <property type="term" value="C:P-body"/>
    <property type="evidence" value="ECO:0000318"/>
    <property type="project" value="GO_Central"/>
</dbReference>
<dbReference type="GO" id="GO:1990904">
    <property type="term" value="C:ribonucleoprotein complex"/>
    <property type="evidence" value="ECO:0000250"/>
    <property type="project" value="UniProtKB"/>
</dbReference>
<dbReference type="GO" id="GO:0017151">
    <property type="term" value="F:DEAD/H-box RNA helicase binding"/>
    <property type="evidence" value="ECO:0000250"/>
    <property type="project" value="UniProtKB"/>
</dbReference>
<dbReference type="GO" id="GO:0003729">
    <property type="term" value="F:mRNA binding"/>
    <property type="evidence" value="ECO:0000318"/>
    <property type="project" value="GO_Central"/>
</dbReference>
<dbReference type="GO" id="GO:0003723">
    <property type="term" value="F:RNA binding"/>
    <property type="evidence" value="ECO:0000250"/>
    <property type="project" value="UniProtKB"/>
</dbReference>
<dbReference type="GO" id="GO:0017148">
    <property type="term" value="P:negative regulation of translation"/>
    <property type="evidence" value="ECO:0000250"/>
    <property type="project" value="UniProtKB"/>
</dbReference>
<dbReference type="GO" id="GO:0033962">
    <property type="term" value="P:P-body assembly"/>
    <property type="evidence" value="ECO:0000318"/>
    <property type="project" value="GO_Central"/>
</dbReference>
<dbReference type="GO" id="GO:0034063">
    <property type="term" value="P:stress granule assembly"/>
    <property type="evidence" value="ECO:0000318"/>
    <property type="project" value="GO_Central"/>
</dbReference>
<dbReference type="CDD" id="cd01736">
    <property type="entry name" value="LSm14_N"/>
    <property type="match status" value="1"/>
</dbReference>
<dbReference type="FunFam" id="2.30.30.100:FF:000006">
    <property type="entry name" value="Protein LSM14 homolog A isoform b"/>
    <property type="match status" value="1"/>
</dbReference>
<dbReference type="Gene3D" id="2.30.30.100">
    <property type="match status" value="1"/>
</dbReference>
<dbReference type="InterPro" id="IPR025762">
    <property type="entry name" value="DFDF"/>
</dbReference>
<dbReference type="InterPro" id="IPR019050">
    <property type="entry name" value="FDF_dom"/>
</dbReference>
<dbReference type="InterPro" id="IPR025761">
    <property type="entry name" value="FFD_box"/>
</dbReference>
<dbReference type="InterPro" id="IPR025609">
    <property type="entry name" value="Lsm14-like_N"/>
</dbReference>
<dbReference type="InterPro" id="IPR010920">
    <property type="entry name" value="LSM_dom_sf"/>
</dbReference>
<dbReference type="InterPro" id="IPR047575">
    <property type="entry name" value="Sm"/>
</dbReference>
<dbReference type="InterPro" id="IPR025768">
    <property type="entry name" value="TFG_box"/>
</dbReference>
<dbReference type="PANTHER" id="PTHR13586:SF2">
    <property type="entry name" value="PROTEIN LSM14 HOMOLOG A"/>
    <property type="match status" value="1"/>
</dbReference>
<dbReference type="PANTHER" id="PTHR13586">
    <property type="entry name" value="SCD6 PROTEIN-RELATED"/>
    <property type="match status" value="1"/>
</dbReference>
<dbReference type="Pfam" id="PF09532">
    <property type="entry name" value="FDF"/>
    <property type="match status" value="1"/>
</dbReference>
<dbReference type="Pfam" id="PF12701">
    <property type="entry name" value="LSM14"/>
    <property type="match status" value="1"/>
</dbReference>
<dbReference type="SMART" id="SM01199">
    <property type="entry name" value="FDF"/>
    <property type="match status" value="1"/>
</dbReference>
<dbReference type="SMART" id="SM01271">
    <property type="entry name" value="LSM14"/>
    <property type="match status" value="1"/>
</dbReference>
<dbReference type="SUPFAM" id="SSF50182">
    <property type="entry name" value="Sm-like ribonucleoproteins"/>
    <property type="match status" value="1"/>
</dbReference>
<dbReference type="PROSITE" id="PS51512">
    <property type="entry name" value="DFDF"/>
    <property type="match status" value="1"/>
</dbReference>
<dbReference type="PROSITE" id="PS51513">
    <property type="entry name" value="FFD"/>
    <property type="match status" value="1"/>
</dbReference>
<dbReference type="PROSITE" id="PS52002">
    <property type="entry name" value="SM"/>
    <property type="match status" value="1"/>
</dbReference>
<dbReference type="PROSITE" id="PS51536">
    <property type="entry name" value="TFG"/>
    <property type="match status" value="1"/>
</dbReference>
<reference evidence="7" key="1">
    <citation type="submission" date="2003-01" db="EMBL/GenBank/DDBJ databases">
        <authorList>
            <consortium name="NIH - Xenopus Gene Collection (XGC) project"/>
        </authorList>
    </citation>
    <scope>NUCLEOTIDE SEQUENCE [LARGE SCALE MRNA]</scope>
    <source>
        <tissue evidence="7">Tail bud</tissue>
    </source>
</reference>